<name>HTPG_NATTJ</name>
<dbReference type="EMBL" id="CP001034">
    <property type="protein sequence ID" value="ACB84441.1"/>
    <property type="molecule type" value="Genomic_DNA"/>
</dbReference>
<dbReference type="RefSeq" id="WP_012447319.1">
    <property type="nucleotide sequence ID" value="NC_010718.1"/>
</dbReference>
<dbReference type="SMR" id="B2A875"/>
<dbReference type="FunCoup" id="B2A875">
    <property type="interactions" value="280"/>
</dbReference>
<dbReference type="STRING" id="457570.Nther_0856"/>
<dbReference type="KEGG" id="nth:Nther_0856"/>
<dbReference type="eggNOG" id="COG0326">
    <property type="taxonomic scope" value="Bacteria"/>
</dbReference>
<dbReference type="HOGENOM" id="CLU_006684_3_0_9"/>
<dbReference type="InParanoid" id="B2A875"/>
<dbReference type="OrthoDB" id="9802640at2"/>
<dbReference type="Proteomes" id="UP000001683">
    <property type="component" value="Chromosome"/>
</dbReference>
<dbReference type="GO" id="GO:0005737">
    <property type="term" value="C:cytoplasm"/>
    <property type="evidence" value="ECO:0007669"/>
    <property type="project" value="UniProtKB-SubCell"/>
</dbReference>
<dbReference type="GO" id="GO:0005524">
    <property type="term" value="F:ATP binding"/>
    <property type="evidence" value="ECO:0007669"/>
    <property type="project" value="UniProtKB-UniRule"/>
</dbReference>
<dbReference type="GO" id="GO:0016887">
    <property type="term" value="F:ATP hydrolysis activity"/>
    <property type="evidence" value="ECO:0007669"/>
    <property type="project" value="InterPro"/>
</dbReference>
<dbReference type="GO" id="GO:0140662">
    <property type="term" value="F:ATP-dependent protein folding chaperone"/>
    <property type="evidence" value="ECO:0007669"/>
    <property type="project" value="InterPro"/>
</dbReference>
<dbReference type="GO" id="GO:0051082">
    <property type="term" value="F:unfolded protein binding"/>
    <property type="evidence" value="ECO:0007669"/>
    <property type="project" value="UniProtKB-UniRule"/>
</dbReference>
<dbReference type="CDD" id="cd16927">
    <property type="entry name" value="HATPase_Hsp90-like"/>
    <property type="match status" value="1"/>
</dbReference>
<dbReference type="FunFam" id="1.20.120.790:FF:000006">
    <property type="entry name" value="Chaperone protein HtpG"/>
    <property type="match status" value="1"/>
</dbReference>
<dbReference type="FunFam" id="3.40.50.11260:FF:000008">
    <property type="entry name" value="Chaperone protein HtpG"/>
    <property type="match status" value="1"/>
</dbReference>
<dbReference type="FunFam" id="3.30.565.10:FF:000357">
    <property type="entry name" value="Heat shock protein HSP 90-beta"/>
    <property type="match status" value="1"/>
</dbReference>
<dbReference type="Gene3D" id="3.30.230.80">
    <property type="match status" value="1"/>
</dbReference>
<dbReference type="Gene3D" id="3.40.50.11260">
    <property type="match status" value="1"/>
</dbReference>
<dbReference type="Gene3D" id="1.20.120.790">
    <property type="entry name" value="Heat shock protein 90, C-terminal domain"/>
    <property type="match status" value="1"/>
</dbReference>
<dbReference type="Gene3D" id="3.30.565.10">
    <property type="entry name" value="Histidine kinase-like ATPase, C-terminal domain"/>
    <property type="match status" value="1"/>
</dbReference>
<dbReference type="HAMAP" id="MF_00505">
    <property type="entry name" value="HSP90"/>
    <property type="match status" value="1"/>
</dbReference>
<dbReference type="InterPro" id="IPR036890">
    <property type="entry name" value="HATPase_C_sf"/>
</dbReference>
<dbReference type="InterPro" id="IPR019805">
    <property type="entry name" value="Heat_shock_protein_90_CS"/>
</dbReference>
<dbReference type="InterPro" id="IPR037196">
    <property type="entry name" value="HSP90_C"/>
</dbReference>
<dbReference type="InterPro" id="IPR001404">
    <property type="entry name" value="Hsp90_fam"/>
</dbReference>
<dbReference type="InterPro" id="IPR020575">
    <property type="entry name" value="Hsp90_N"/>
</dbReference>
<dbReference type="InterPro" id="IPR020568">
    <property type="entry name" value="Ribosomal_Su5_D2-typ_SF"/>
</dbReference>
<dbReference type="NCBIfam" id="NF003555">
    <property type="entry name" value="PRK05218.1"/>
    <property type="match status" value="1"/>
</dbReference>
<dbReference type="PANTHER" id="PTHR11528">
    <property type="entry name" value="HEAT SHOCK PROTEIN 90 FAMILY MEMBER"/>
    <property type="match status" value="1"/>
</dbReference>
<dbReference type="Pfam" id="PF13589">
    <property type="entry name" value="HATPase_c_3"/>
    <property type="match status" value="1"/>
</dbReference>
<dbReference type="Pfam" id="PF00183">
    <property type="entry name" value="HSP90"/>
    <property type="match status" value="2"/>
</dbReference>
<dbReference type="PIRSF" id="PIRSF002583">
    <property type="entry name" value="Hsp90"/>
    <property type="match status" value="1"/>
</dbReference>
<dbReference type="PRINTS" id="PR00775">
    <property type="entry name" value="HEATSHOCK90"/>
</dbReference>
<dbReference type="SUPFAM" id="SSF55874">
    <property type="entry name" value="ATPase domain of HSP90 chaperone/DNA topoisomerase II/histidine kinase"/>
    <property type="match status" value="1"/>
</dbReference>
<dbReference type="SUPFAM" id="SSF110942">
    <property type="entry name" value="HSP90 C-terminal domain"/>
    <property type="match status" value="1"/>
</dbReference>
<dbReference type="SUPFAM" id="SSF54211">
    <property type="entry name" value="Ribosomal protein S5 domain 2-like"/>
    <property type="match status" value="1"/>
</dbReference>
<dbReference type="PROSITE" id="PS00298">
    <property type="entry name" value="HSP90"/>
    <property type="match status" value="1"/>
</dbReference>
<reference key="1">
    <citation type="submission" date="2008-04" db="EMBL/GenBank/DDBJ databases">
        <title>Complete sequence of chromosome of Natranaerobius thermophilus JW/NM-WN-LF.</title>
        <authorList>
            <consortium name="US DOE Joint Genome Institute"/>
            <person name="Copeland A."/>
            <person name="Lucas S."/>
            <person name="Lapidus A."/>
            <person name="Glavina del Rio T."/>
            <person name="Dalin E."/>
            <person name="Tice H."/>
            <person name="Bruce D."/>
            <person name="Goodwin L."/>
            <person name="Pitluck S."/>
            <person name="Chertkov O."/>
            <person name="Brettin T."/>
            <person name="Detter J.C."/>
            <person name="Han C."/>
            <person name="Kuske C.R."/>
            <person name="Schmutz J."/>
            <person name="Larimer F."/>
            <person name="Land M."/>
            <person name="Hauser L."/>
            <person name="Kyrpides N."/>
            <person name="Lykidis A."/>
            <person name="Mesbah N.M."/>
            <person name="Wiegel J."/>
        </authorList>
    </citation>
    <scope>NUCLEOTIDE SEQUENCE [LARGE SCALE GENOMIC DNA]</scope>
    <source>
        <strain>ATCC BAA-1301 / DSM 18059 / JW/NM-WN-LF</strain>
    </source>
</reference>
<sequence>MATQEFQAETKRLLDIVINSIYSNKEIFLRELISNASDAIDKLYYKSLTDNSLDFNKDDYYIKITVDKENRQLKISDTGIGMTRQELEDNIGVIARSGSLDFKKANEQEIKDGHDIIGQFGVGFYSAFMVAEEVTIISKAYGSDHAYKWESEGIEGYSVSPTEKESVGTDVILKIKENTDDEDYDQYLDEHRLKSIVKKYSDFIRYPIKMDLTKSKPKDDNEEEYEEYIEEETVNTMVPIWERNKNELTDEDYKNFYRERHYGFDEPITHIHINAEGTISFKAVLFIPERPPFNFYTKEFEKGLELYSNGVLIMNKCPDLLPDYFSFVRGVVDSEDLSLNISREMLQQDKQLKLIAKNIKNKVKKELKNVMENDREKYEEFFESFGTLLKYGIYSEFGQNKETLQDLLLFYSSKENKMVSLDEYISRMGEDQKYIYYATGESVERIDKLPQTEFVKDKGYEVLYLTEDVDEFAIKMMGSYQDVEFKSVSSKDLGLDSEDEETSDEKEKEYKGMFDKMAEILSDKVNTVRASERLKDHPVCLANEGEISIEMEKVLQSMPNNQNVQAEKALEINVNHDVFDKLTEAYEQDEDKFKLYTDLLYNQACLIEGLPIEDPVKYTNNVCKIMS</sequence>
<accession>B2A875</accession>
<proteinExistence type="inferred from homology"/>
<gene>
    <name evidence="1" type="primary">htpG</name>
    <name type="ordered locus">Nther_0856</name>
</gene>
<keyword id="KW-0067">ATP-binding</keyword>
<keyword id="KW-0143">Chaperone</keyword>
<keyword id="KW-0963">Cytoplasm</keyword>
<keyword id="KW-0547">Nucleotide-binding</keyword>
<keyword id="KW-1185">Reference proteome</keyword>
<keyword id="KW-0346">Stress response</keyword>
<comment type="function">
    <text evidence="1">Molecular chaperone. Has ATPase activity.</text>
</comment>
<comment type="subunit">
    <text evidence="1">Homodimer.</text>
</comment>
<comment type="subcellular location">
    <subcellularLocation>
        <location evidence="1">Cytoplasm</location>
    </subcellularLocation>
</comment>
<comment type="similarity">
    <text evidence="1">Belongs to the heat shock protein 90 family.</text>
</comment>
<feature type="chain" id="PRO_1000127033" description="Chaperone protein HtpG">
    <location>
        <begin position="1"/>
        <end position="627"/>
    </location>
</feature>
<feature type="region of interest" description="A; substrate-binding" evidence="1">
    <location>
        <begin position="1"/>
        <end position="343"/>
    </location>
</feature>
<feature type="region of interest" description="B" evidence="1">
    <location>
        <begin position="344"/>
        <end position="553"/>
    </location>
</feature>
<feature type="region of interest" description="C" evidence="1">
    <location>
        <begin position="554"/>
        <end position="627"/>
    </location>
</feature>
<protein>
    <recommendedName>
        <fullName evidence="1">Chaperone protein HtpG</fullName>
    </recommendedName>
    <alternativeName>
        <fullName evidence="1">Heat shock protein HtpG</fullName>
    </alternativeName>
    <alternativeName>
        <fullName evidence="1">High temperature protein G</fullName>
    </alternativeName>
</protein>
<evidence type="ECO:0000255" key="1">
    <source>
        <dbReference type="HAMAP-Rule" id="MF_00505"/>
    </source>
</evidence>
<organism>
    <name type="scientific">Natranaerobius thermophilus (strain ATCC BAA-1301 / DSM 18059 / JW/NM-WN-LF)</name>
    <dbReference type="NCBI Taxonomy" id="457570"/>
    <lineage>
        <taxon>Bacteria</taxon>
        <taxon>Bacillati</taxon>
        <taxon>Bacillota</taxon>
        <taxon>Clostridia</taxon>
        <taxon>Natranaerobiales</taxon>
        <taxon>Natranaerobiaceae</taxon>
        <taxon>Natranaerobius</taxon>
    </lineage>
</organism>